<accession>Q8EAM8</accession>
<keyword id="KW-0997">Cell inner membrane</keyword>
<keyword id="KW-1003">Cell membrane</keyword>
<keyword id="KW-1015">Disulfide bond</keyword>
<keyword id="KW-0249">Electron transport</keyword>
<keyword id="KW-0472">Membrane</keyword>
<keyword id="KW-0560">Oxidoreductase</keyword>
<keyword id="KW-0676">Redox-active center</keyword>
<keyword id="KW-1185">Reference proteome</keyword>
<keyword id="KW-0812">Transmembrane</keyword>
<keyword id="KW-1133">Transmembrane helix</keyword>
<keyword id="KW-0813">Transport</keyword>
<name>DSBI_SHEON</name>
<organism>
    <name type="scientific">Shewanella oneidensis (strain ATCC 700550 / JCM 31522 / CIP 106686 / LMG 19005 / NCIMB 14063 / MR-1)</name>
    <dbReference type="NCBI Taxonomy" id="211586"/>
    <lineage>
        <taxon>Bacteria</taxon>
        <taxon>Pseudomonadati</taxon>
        <taxon>Pseudomonadota</taxon>
        <taxon>Gammaproteobacteria</taxon>
        <taxon>Alteromonadales</taxon>
        <taxon>Shewanellaceae</taxon>
        <taxon>Shewanella</taxon>
    </lineage>
</organism>
<protein>
    <recommendedName>
        <fullName>Putative protein-disulfide oxidoreductase DsbI</fullName>
    </recommendedName>
</protein>
<reference key="1">
    <citation type="journal article" date="2002" name="Nat. Biotechnol.">
        <title>Genome sequence of the dissimilatory metal ion-reducing bacterium Shewanella oneidensis.</title>
        <authorList>
            <person name="Heidelberg J.F."/>
            <person name="Paulsen I.T."/>
            <person name="Nelson K.E."/>
            <person name="Gaidos E.J."/>
            <person name="Nelson W.C."/>
            <person name="Read T.D."/>
            <person name="Eisen J.A."/>
            <person name="Seshadri R."/>
            <person name="Ward N.L."/>
            <person name="Methe B.A."/>
            <person name="Clayton R.A."/>
            <person name="Meyer T."/>
            <person name="Tsapin A."/>
            <person name="Scott J."/>
            <person name="Beanan M.J."/>
            <person name="Brinkac L.M."/>
            <person name="Daugherty S.C."/>
            <person name="DeBoy R.T."/>
            <person name="Dodson R.J."/>
            <person name="Durkin A.S."/>
            <person name="Haft D.H."/>
            <person name="Kolonay J.F."/>
            <person name="Madupu R."/>
            <person name="Peterson J.D."/>
            <person name="Umayam L.A."/>
            <person name="White O."/>
            <person name="Wolf A.M."/>
            <person name="Vamathevan J.J."/>
            <person name="Weidman J.F."/>
            <person name="Impraim M."/>
            <person name="Lee K."/>
            <person name="Berry K.J."/>
            <person name="Lee C."/>
            <person name="Mueller J."/>
            <person name="Khouri H.M."/>
            <person name="Gill J."/>
            <person name="Utterback T.R."/>
            <person name="McDonald L.A."/>
            <person name="Feldblyum T.V."/>
            <person name="Smith H.O."/>
            <person name="Venter J.C."/>
            <person name="Nealson K.H."/>
            <person name="Fraser C.M."/>
        </authorList>
    </citation>
    <scope>NUCLEOTIDE SEQUENCE [LARGE SCALE GENOMIC DNA]</scope>
    <source>
        <strain>ATCC 700550 / JCM 31522 / CIP 106686 / LMG 19005 / NCIMB 14063 / MR-1</strain>
    </source>
</reference>
<comment type="function">
    <text evidence="1">Required for disulfide bond formation in some proteins. Part of a redox system composed of DsbI and DsbL that mediates formation of an essential disulfide bond in AssT (By similarity).</text>
</comment>
<comment type="subunit">
    <text evidence="1">Interacts with DsbL.</text>
</comment>
<comment type="subcellular location">
    <subcellularLocation>
        <location evidence="1">Cell inner membrane</location>
        <topology evidence="1">Multi-pass membrane protein</topology>
    </subcellularLocation>
</comment>
<comment type="similarity">
    <text evidence="3">Belongs to the DsbB family. DsbI subfamily.</text>
</comment>
<gene>
    <name type="primary">dsbI</name>
    <name type="ordered locus">SO_3870</name>
</gene>
<dbReference type="EMBL" id="AE014299">
    <property type="protein sequence ID" value="AAN56846.1"/>
    <property type="molecule type" value="Genomic_DNA"/>
</dbReference>
<dbReference type="RefSeq" id="NP_719402.1">
    <property type="nucleotide sequence ID" value="NC_004347.2"/>
</dbReference>
<dbReference type="RefSeq" id="WP_011073626.1">
    <property type="nucleotide sequence ID" value="NC_004347.2"/>
</dbReference>
<dbReference type="STRING" id="211586.SO_3870"/>
<dbReference type="PaxDb" id="211586-SO_3870"/>
<dbReference type="KEGG" id="son:SO_3870"/>
<dbReference type="PATRIC" id="fig|211586.12.peg.3757"/>
<dbReference type="eggNOG" id="COG1495">
    <property type="taxonomic scope" value="Bacteria"/>
</dbReference>
<dbReference type="HOGENOM" id="CLU_090583_1_0_6"/>
<dbReference type="OrthoDB" id="3711263at2"/>
<dbReference type="PhylomeDB" id="Q8EAM8"/>
<dbReference type="BioCyc" id="SONE211586:G1GMP-3591-MONOMER"/>
<dbReference type="Proteomes" id="UP000008186">
    <property type="component" value="Chromosome"/>
</dbReference>
<dbReference type="GO" id="GO:0005886">
    <property type="term" value="C:plasma membrane"/>
    <property type="evidence" value="ECO:0007669"/>
    <property type="project" value="UniProtKB-SubCell"/>
</dbReference>
<dbReference type="GO" id="GO:0015035">
    <property type="term" value="F:protein-disulfide reductase activity"/>
    <property type="evidence" value="ECO:0000318"/>
    <property type="project" value="GO_Central"/>
</dbReference>
<dbReference type="GO" id="GO:0006457">
    <property type="term" value="P:protein folding"/>
    <property type="evidence" value="ECO:0000318"/>
    <property type="project" value="GO_Central"/>
</dbReference>
<dbReference type="Gene3D" id="1.20.1550.10">
    <property type="entry name" value="DsbB-like"/>
    <property type="match status" value="1"/>
</dbReference>
<dbReference type="InterPro" id="IPR003752">
    <property type="entry name" value="DiS_bond_form_DsbB/BdbC"/>
</dbReference>
<dbReference type="InterPro" id="IPR050183">
    <property type="entry name" value="DsbB"/>
</dbReference>
<dbReference type="InterPro" id="IPR023380">
    <property type="entry name" value="DsbB-like_sf"/>
</dbReference>
<dbReference type="PANTHER" id="PTHR36570">
    <property type="entry name" value="DISULFIDE BOND FORMATION PROTEIN B"/>
    <property type="match status" value="1"/>
</dbReference>
<dbReference type="PANTHER" id="PTHR36570:SF1">
    <property type="entry name" value="PROTEIN-DISULFIDE OXIDOREDUCTASE DSBI"/>
    <property type="match status" value="1"/>
</dbReference>
<dbReference type="Pfam" id="PF02600">
    <property type="entry name" value="DsbB"/>
    <property type="match status" value="1"/>
</dbReference>
<dbReference type="SUPFAM" id="SSF158442">
    <property type="entry name" value="DsbB-like"/>
    <property type="match status" value="1"/>
</dbReference>
<proteinExistence type="inferred from homology"/>
<evidence type="ECO:0000250" key="1"/>
<evidence type="ECO:0000255" key="2"/>
<evidence type="ECO:0000305" key="3"/>
<feature type="chain" id="PRO_0000059392" description="Putative protein-disulfide oxidoreductase DsbI">
    <location>
        <begin position="1"/>
        <end position="212"/>
    </location>
</feature>
<feature type="transmembrane region" description="Helical" evidence="2">
    <location>
        <begin position="27"/>
        <end position="49"/>
    </location>
</feature>
<feature type="transmembrane region" description="Helical" evidence="2">
    <location>
        <begin position="59"/>
        <end position="76"/>
    </location>
</feature>
<feature type="transmembrane region" description="Helical" evidence="2">
    <location>
        <begin position="83"/>
        <end position="102"/>
    </location>
</feature>
<feature type="transmembrane region" description="Helical" evidence="2">
    <location>
        <begin position="177"/>
        <end position="199"/>
    </location>
</feature>
<feature type="disulfide bond" description="Redox-active" evidence="1">
    <location>
        <begin position="55"/>
        <end position="58"/>
    </location>
</feature>
<feature type="disulfide bond" description="Redox-active" evidence="1">
    <location>
        <begin position="135"/>
        <end position="161"/>
    </location>
</feature>
<sequence>MSINEVFRSFKAQPVNQLAKIQAERPIWFVMVGAAIFLILSAIFYFQLFLAMAPCEKCVYIRFSQSCIVIAGLIILINPRNNILKTLGLLLAWYAMIQGWIWSFELMKIHDAAHMVVDESMDFFAAAGDAAGSACSTEPRFPLGLPLDKWLPFEFAPTGGCGEDDWALFGLNMAHYCMIAYATFMVCLAPLTLGWFASFMTDRRNTIVYQTR</sequence>